<organism>
    <name type="scientific">Mannheimia succiniciproducens (strain KCTC 0769BP / MBEL55E)</name>
    <dbReference type="NCBI Taxonomy" id="221988"/>
    <lineage>
        <taxon>Bacteria</taxon>
        <taxon>Pseudomonadati</taxon>
        <taxon>Pseudomonadota</taxon>
        <taxon>Gammaproteobacteria</taxon>
        <taxon>Pasteurellales</taxon>
        <taxon>Pasteurellaceae</taxon>
        <taxon>Basfia</taxon>
    </lineage>
</organism>
<comment type="function">
    <text evidence="1">Required for the insertion and/or proper folding and/or complex formation of integral membrane proteins into the membrane. Involved in integration of membrane proteins that insert both dependently and independently of the Sec translocase complex, as well as at least some lipoproteins. Aids folding of multispanning membrane proteins.</text>
</comment>
<comment type="subunit">
    <text evidence="1">Interacts with the Sec translocase complex via SecD. Specifically interacts with transmembrane segments of nascent integral membrane proteins during membrane integration.</text>
</comment>
<comment type="subcellular location">
    <subcellularLocation>
        <location evidence="1">Cell inner membrane</location>
        <topology evidence="1">Multi-pass membrane protein</topology>
    </subcellularLocation>
</comment>
<comment type="similarity">
    <text evidence="1">Belongs to the OXA1/ALB3/YidC family. Type 1 subfamily.</text>
</comment>
<keyword id="KW-0997">Cell inner membrane</keyword>
<keyword id="KW-1003">Cell membrane</keyword>
<keyword id="KW-0143">Chaperone</keyword>
<keyword id="KW-0472">Membrane</keyword>
<keyword id="KW-0653">Protein transport</keyword>
<keyword id="KW-0812">Transmembrane</keyword>
<keyword id="KW-1133">Transmembrane helix</keyword>
<keyword id="KW-0813">Transport</keyword>
<protein>
    <recommendedName>
        <fullName evidence="1">Membrane protein insertase YidC</fullName>
    </recommendedName>
    <alternativeName>
        <fullName evidence="1">Foldase YidC</fullName>
    </alternativeName>
    <alternativeName>
        <fullName evidence="1">Membrane integrase YidC</fullName>
    </alternativeName>
    <alternativeName>
        <fullName evidence="1">Membrane protein YidC</fullName>
    </alternativeName>
</protein>
<name>YIDC_MANSM</name>
<gene>
    <name evidence="1" type="primary">yidC</name>
    <name type="ordered locus">MS0481</name>
</gene>
<feature type="chain" id="PRO_1000070119" description="Membrane protein insertase YidC">
    <location>
        <begin position="1"/>
        <end position="540"/>
    </location>
</feature>
<feature type="transmembrane region" description="Helical" evidence="1">
    <location>
        <begin position="7"/>
        <end position="27"/>
    </location>
</feature>
<feature type="transmembrane region" description="Helical" evidence="1">
    <location>
        <begin position="345"/>
        <end position="365"/>
    </location>
</feature>
<feature type="transmembrane region" description="Helical" evidence="1">
    <location>
        <begin position="415"/>
        <end position="435"/>
    </location>
</feature>
<feature type="transmembrane region" description="Helical" evidence="1">
    <location>
        <begin position="453"/>
        <end position="473"/>
    </location>
</feature>
<feature type="transmembrane region" description="Helical" evidence="1">
    <location>
        <begin position="494"/>
        <end position="514"/>
    </location>
</feature>
<accession>Q65VC2</accession>
<dbReference type="EMBL" id="AE016827">
    <property type="protein sequence ID" value="AAU37088.1"/>
    <property type="molecule type" value="Genomic_DNA"/>
</dbReference>
<dbReference type="RefSeq" id="WP_011199662.1">
    <property type="nucleotide sequence ID" value="NC_006300.1"/>
</dbReference>
<dbReference type="SMR" id="Q65VC2"/>
<dbReference type="STRING" id="221988.MS0481"/>
<dbReference type="KEGG" id="msu:MS0481"/>
<dbReference type="eggNOG" id="COG0706">
    <property type="taxonomic scope" value="Bacteria"/>
</dbReference>
<dbReference type="HOGENOM" id="CLU_016535_3_0_6"/>
<dbReference type="OrthoDB" id="9780552at2"/>
<dbReference type="Proteomes" id="UP000000607">
    <property type="component" value="Chromosome"/>
</dbReference>
<dbReference type="GO" id="GO:0005886">
    <property type="term" value="C:plasma membrane"/>
    <property type="evidence" value="ECO:0007669"/>
    <property type="project" value="UniProtKB-SubCell"/>
</dbReference>
<dbReference type="GO" id="GO:0032977">
    <property type="term" value="F:membrane insertase activity"/>
    <property type="evidence" value="ECO:0007669"/>
    <property type="project" value="InterPro"/>
</dbReference>
<dbReference type="GO" id="GO:0051205">
    <property type="term" value="P:protein insertion into membrane"/>
    <property type="evidence" value="ECO:0007669"/>
    <property type="project" value="TreeGrafter"/>
</dbReference>
<dbReference type="GO" id="GO:0015031">
    <property type="term" value="P:protein transport"/>
    <property type="evidence" value="ECO:0007669"/>
    <property type="project" value="UniProtKB-KW"/>
</dbReference>
<dbReference type="CDD" id="cd20070">
    <property type="entry name" value="5TM_YidC_Alb3"/>
    <property type="match status" value="1"/>
</dbReference>
<dbReference type="CDD" id="cd19961">
    <property type="entry name" value="EcYidC-like_peri"/>
    <property type="match status" value="1"/>
</dbReference>
<dbReference type="Gene3D" id="2.70.98.90">
    <property type="match status" value="1"/>
</dbReference>
<dbReference type="HAMAP" id="MF_01810">
    <property type="entry name" value="YidC_type1"/>
    <property type="match status" value="1"/>
</dbReference>
<dbReference type="InterPro" id="IPR019998">
    <property type="entry name" value="Membr_insert_YidC"/>
</dbReference>
<dbReference type="InterPro" id="IPR028053">
    <property type="entry name" value="Membr_insert_YidC_N"/>
</dbReference>
<dbReference type="InterPro" id="IPR001708">
    <property type="entry name" value="YidC/ALB3/OXA1/COX18"/>
</dbReference>
<dbReference type="InterPro" id="IPR028055">
    <property type="entry name" value="YidC/Oxa/ALB_C"/>
</dbReference>
<dbReference type="InterPro" id="IPR047196">
    <property type="entry name" value="YidC_ALB_C"/>
</dbReference>
<dbReference type="InterPro" id="IPR038221">
    <property type="entry name" value="YidC_periplasmic_sf"/>
</dbReference>
<dbReference type="NCBIfam" id="NF002351">
    <property type="entry name" value="PRK01318.1-1"/>
    <property type="match status" value="1"/>
</dbReference>
<dbReference type="NCBIfam" id="NF002352">
    <property type="entry name" value="PRK01318.1-3"/>
    <property type="match status" value="1"/>
</dbReference>
<dbReference type="NCBIfam" id="TIGR03593">
    <property type="entry name" value="yidC_nterm"/>
    <property type="match status" value="1"/>
</dbReference>
<dbReference type="NCBIfam" id="TIGR03592">
    <property type="entry name" value="yidC_oxa1_cterm"/>
    <property type="match status" value="1"/>
</dbReference>
<dbReference type="PANTHER" id="PTHR12428:SF65">
    <property type="entry name" value="CYTOCHROME C OXIDASE ASSEMBLY PROTEIN COX18, MITOCHONDRIAL"/>
    <property type="match status" value="1"/>
</dbReference>
<dbReference type="PANTHER" id="PTHR12428">
    <property type="entry name" value="OXA1"/>
    <property type="match status" value="1"/>
</dbReference>
<dbReference type="Pfam" id="PF02096">
    <property type="entry name" value="60KD_IMP"/>
    <property type="match status" value="1"/>
</dbReference>
<dbReference type="Pfam" id="PF14849">
    <property type="entry name" value="YidC_periplas"/>
    <property type="match status" value="1"/>
</dbReference>
<dbReference type="PRINTS" id="PR00701">
    <property type="entry name" value="60KDINNERMP"/>
</dbReference>
<dbReference type="PRINTS" id="PR01900">
    <property type="entry name" value="YIDCPROTEIN"/>
</dbReference>
<reference key="1">
    <citation type="journal article" date="2004" name="Nat. Biotechnol.">
        <title>The genome sequence of the capnophilic rumen bacterium Mannheimia succiniciproducens.</title>
        <authorList>
            <person name="Hong S.H."/>
            <person name="Kim J.S."/>
            <person name="Lee S.Y."/>
            <person name="In Y.H."/>
            <person name="Choi S.S."/>
            <person name="Rih J.-K."/>
            <person name="Kim C.H."/>
            <person name="Jeong H."/>
            <person name="Hur C.G."/>
            <person name="Kim J.J."/>
        </authorList>
    </citation>
    <scope>NUCLEOTIDE SEQUENCE [LARGE SCALE GENOMIC DNA]</scope>
    <source>
        <strain>KCTC 0769BP / MBEL55E</strain>
    </source>
</reference>
<proteinExistence type="inferred from homology"/>
<sequence>MDSRRSLLVLALLFISFLVYEQWQMDYNTPKPVATEQAQAVSSNAEMPASTSSTEGTVDNVAQGKIISIQNDVFTLKVDTLGGDVVESSLTNYAAELNSDARFILLQNKPNEVYVAQSGLIGKNGIDTKAGRAAYQVEAEQFTLADGQNELRVPLTLEKDGVIYRKVFVIKAGSYDIEVNYEIQNQTNEAIEVQPYGQLKHTLVQSSGSMAMPTYTGGAYSSADTNYKKYSFDEMKDKNLSIDTKAGWVAVLQHYFVSAWIPNQDADNQLYTSTANGLGFIGYRGPVVNVPAGGSETIKSALWTGPKLQNEMGAVANHLDLTVDYGWAWFIAKPLFWLLNVIQSIVSNWGLAIIGVTIVVKGILYPLTKAQYTSMAKMRMLQPKLQEMRERFGDDRQRMSQEMMKLYKEEKVNPLGGCLPLLIQMPIFIALYWTFMEAVELRHAPFFGWIQDLSAQDPYYILPILMGASMFLLQKMSPTPVADPMQQKIMNFMPLIFMVFFLWFPAGLVLYWLVSNIITIVQQQLIYRGLEKKGLHSRKK</sequence>
<evidence type="ECO:0000255" key="1">
    <source>
        <dbReference type="HAMAP-Rule" id="MF_01810"/>
    </source>
</evidence>